<gene>
    <name evidence="1" type="primary">folD</name>
    <name type="ordered locus">SUB1277</name>
</gene>
<reference key="1">
    <citation type="journal article" date="2009" name="BMC Genomics">
        <title>Evidence for niche adaptation in the genome of the bovine pathogen Streptococcus uberis.</title>
        <authorList>
            <person name="Ward P.N."/>
            <person name="Holden M.T.G."/>
            <person name="Leigh J.A."/>
            <person name="Lennard N."/>
            <person name="Bignell A."/>
            <person name="Barron A."/>
            <person name="Clark L."/>
            <person name="Quail M.A."/>
            <person name="Woodward J."/>
            <person name="Barrell B.G."/>
            <person name="Egan S.A."/>
            <person name="Field T.R."/>
            <person name="Maskell D."/>
            <person name="Kehoe M."/>
            <person name="Dowson C.G."/>
            <person name="Chanter N."/>
            <person name="Whatmore A.M."/>
            <person name="Bentley S.D."/>
            <person name="Parkhill J."/>
        </authorList>
    </citation>
    <scope>NUCLEOTIDE SEQUENCE [LARGE SCALE GENOMIC DNA]</scope>
    <source>
        <strain>ATCC BAA-854 / 0140J</strain>
    </source>
</reference>
<feature type="chain" id="PRO_1000185630" description="Bifunctional protein FolD">
    <location>
        <begin position="1"/>
        <end position="284"/>
    </location>
</feature>
<feature type="binding site" evidence="1">
    <location>
        <begin position="165"/>
        <end position="167"/>
    </location>
    <ligand>
        <name>NADP(+)</name>
        <dbReference type="ChEBI" id="CHEBI:58349"/>
    </ligand>
</feature>
<feature type="binding site" evidence="1">
    <location>
        <position position="190"/>
    </location>
    <ligand>
        <name>NADP(+)</name>
        <dbReference type="ChEBI" id="CHEBI:58349"/>
    </ligand>
</feature>
<organism>
    <name type="scientific">Streptococcus uberis (strain ATCC BAA-854 / 0140J)</name>
    <dbReference type="NCBI Taxonomy" id="218495"/>
    <lineage>
        <taxon>Bacteria</taxon>
        <taxon>Bacillati</taxon>
        <taxon>Bacillota</taxon>
        <taxon>Bacilli</taxon>
        <taxon>Lactobacillales</taxon>
        <taxon>Streptococcaceae</taxon>
        <taxon>Streptococcus</taxon>
    </lineage>
</organism>
<protein>
    <recommendedName>
        <fullName evidence="1">Bifunctional protein FolD</fullName>
    </recommendedName>
    <domain>
        <recommendedName>
            <fullName evidence="1">Methylenetetrahydrofolate dehydrogenase</fullName>
            <ecNumber evidence="1">1.5.1.5</ecNumber>
        </recommendedName>
    </domain>
    <domain>
        <recommendedName>
            <fullName evidence="1">Methenyltetrahydrofolate cyclohydrolase</fullName>
            <ecNumber evidence="1">3.5.4.9</ecNumber>
        </recommendedName>
    </domain>
</protein>
<sequence length="284" mass="31281">MTQIIDGKALAQKMQSQLAKKVEDLKQEFGIVPGLVVILVGDNPASQVYVRNKERSAIAAGFKSETIRLSESICQEELIKIIHRYNKDESIHGILVQLPLPTHINEKRIILEIDPHKDVDGFHPMNTGHLWSGRPIMVPCTPAGIMEMLSEYQIDLEGKHAVIIGRSNIVGKPMAQLLLDKNATVTLTHSRTRNLSKISSEADVLIVAIGQGHFVTEEYVKEGAVVIDVGMNRDDNGKLIGDVAFEEVSRKASYITPVPGGVGPMTITMLLEQTYQSALRRVSS</sequence>
<dbReference type="EC" id="1.5.1.5" evidence="1"/>
<dbReference type="EC" id="3.5.4.9" evidence="1"/>
<dbReference type="EMBL" id="AM946015">
    <property type="protein sequence ID" value="CAR42790.1"/>
    <property type="molecule type" value="Genomic_DNA"/>
</dbReference>
<dbReference type="RefSeq" id="WP_012658751.1">
    <property type="nucleotide sequence ID" value="NC_012004.1"/>
</dbReference>
<dbReference type="SMR" id="B9DUU0"/>
<dbReference type="STRING" id="218495.SUB1277"/>
<dbReference type="KEGG" id="sub:SUB1277"/>
<dbReference type="eggNOG" id="COG0190">
    <property type="taxonomic scope" value="Bacteria"/>
</dbReference>
<dbReference type="HOGENOM" id="CLU_034045_2_1_9"/>
<dbReference type="OrthoDB" id="9803580at2"/>
<dbReference type="UniPathway" id="UPA00193"/>
<dbReference type="Proteomes" id="UP000000449">
    <property type="component" value="Chromosome"/>
</dbReference>
<dbReference type="GO" id="GO:0005829">
    <property type="term" value="C:cytosol"/>
    <property type="evidence" value="ECO:0007669"/>
    <property type="project" value="TreeGrafter"/>
</dbReference>
<dbReference type="GO" id="GO:0004477">
    <property type="term" value="F:methenyltetrahydrofolate cyclohydrolase activity"/>
    <property type="evidence" value="ECO:0007669"/>
    <property type="project" value="UniProtKB-UniRule"/>
</dbReference>
<dbReference type="GO" id="GO:0004488">
    <property type="term" value="F:methylenetetrahydrofolate dehydrogenase (NADP+) activity"/>
    <property type="evidence" value="ECO:0007669"/>
    <property type="project" value="UniProtKB-UniRule"/>
</dbReference>
<dbReference type="GO" id="GO:0000105">
    <property type="term" value="P:L-histidine biosynthetic process"/>
    <property type="evidence" value="ECO:0007669"/>
    <property type="project" value="UniProtKB-KW"/>
</dbReference>
<dbReference type="GO" id="GO:0009086">
    <property type="term" value="P:methionine biosynthetic process"/>
    <property type="evidence" value="ECO:0007669"/>
    <property type="project" value="UniProtKB-KW"/>
</dbReference>
<dbReference type="GO" id="GO:0006164">
    <property type="term" value="P:purine nucleotide biosynthetic process"/>
    <property type="evidence" value="ECO:0007669"/>
    <property type="project" value="UniProtKB-KW"/>
</dbReference>
<dbReference type="GO" id="GO:0035999">
    <property type="term" value="P:tetrahydrofolate interconversion"/>
    <property type="evidence" value="ECO:0007669"/>
    <property type="project" value="UniProtKB-UniRule"/>
</dbReference>
<dbReference type="CDD" id="cd01080">
    <property type="entry name" value="NAD_bind_m-THF_DH_Cyclohyd"/>
    <property type="match status" value="1"/>
</dbReference>
<dbReference type="FunFam" id="3.40.50.720:FF:000094">
    <property type="entry name" value="Bifunctional protein FolD"/>
    <property type="match status" value="1"/>
</dbReference>
<dbReference type="FunFam" id="3.40.50.10860:FF:000005">
    <property type="entry name" value="C-1-tetrahydrofolate synthase, cytoplasmic, putative"/>
    <property type="match status" value="1"/>
</dbReference>
<dbReference type="Gene3D" id="3.40.50.10860">
    <property type="entry name" value="Leucine Dehydrogenase, chain A, domain 1"/>
    <property type="match status" value="1"/>
</dbReference>
<dbReference type="Gene3D" id="3.40.50.720">
    <property type="entry name" value="NAD(P)-binding Rossmann-like Domain"/>
    <property type="match status" value="1"/>
</dbReference>
<dbReference type="HAMAP" id="MF_01576">
    <property type="entry name" value="THF_DHG_CYH"/>
    <property type="match status" value="1"/>
</dbReference>
<dbReference type="InterPro" id="IPR046346">
    <property type="entry name" value="Aminoacid_DH-like_N_sf"/>
</dbReference>
<dbReference type="InterPro" id="IPR036291">
    <property type="entry name" value="NAD(P)-bd_dom_sf"/>
</dbReference>
<dbReference type="InterPro" id="IPR000672">
    <property type="entry name" value="THF_DH/CycHdrlase"/>
</dbReference>
<dbReference type="InterPro" id="IPR020630">
    <property type="entry name" value="THF_DH/CycHdrlase_cat_dom"/>
</dbReference>
<dbReference type="InterPro" id="IPR020867">
    <property type="entry name" value="THF_DH/CycHdrlase_CS"/>
</dbReference>
<dbReference type="InterPro" id="IPR020631">
    <property type="entry name" value="THF_DH/CycHdrlase_NAD-bd_dom"/>
</dbReference>
<dbReference type="NCBIfam" id="NF008058">
    <property type="entry name" value="PRK10792.1"/>
    <property type="match status" value="1"/>
</dbReference>
<dbReference type="NCBIfam" id="NF010776">
    <property type="entry name" value="PRK14179.1"/>
    <property type="match status" value="1"/>
</dbReference>
<dbReference type="NCBIfam" id="NF010783">
    <property type="entry name" value="PRK14186.1"/>
    <property type="match status" value="1"/>
</dbReference>
<dbReference type="PANTHER" id="PTHR48099:SF5">
    <property type="entry name" value="C-1-TETRAHYDROFOLATE SYNTHASE, CYTOPLASMIC"/>
    <property type="match status" value="1"/>
</dbReference>
<dbReference type="PANTHER" id="PTHR48099">
    <property type="entry name" value="C-1-TETRAHYDROFOLATE SYNTHASE, CYTOPLASMIC-RELATED"/>
    <property type="match status" value="1"/>
</dbReference>
<dbReference type="Pfam" id="PF00763">
    <property type="entry name" value="THF_DHG_CYH"/>
    <property type="match status" value="1"/>
</dbReference>
<dbReference type="Pfam" id="PF02882">
    <property type="entry name" value="THF_DHG_CYH_C"/>
    <property type="match status" value="1"/>
</dbReference>
<dbReference type="PRINTS" id="PR00085">
    <property type="entry name" value="THFDHDRGNASE"/>
</dbReference>
<dbReference type="SUPFAM" id="SSF53223">
    <property type="entry name" value="Aminoacid dehydrogenase-like, N-terminal domain"/>
    <property type="match status" value="1"/>
</dbReference>
<dbReference type="SUPFAM" id="SSF51735">
    <property type="entry name" value="NAD(P)-binding Rossmann-fold domains"/>
    <property type="match status" value="1"/>
</dbReference>
<dbReference type="PROSITE" id="PS00766">
    <property type="entry name" value="THF_DHG_CYH_1"/>
    <property type="match status" value="1"/>
</dbReference>
<dbReference type="PROSITE" id="PS00767">
    <property type="entry name" value="THF_DHG_CYH_2"/>
    <property type="match status" value="1"/>
</dbReference>
<keyword id="KW-0028">Amino-acid biosynthesis</keyword>
<keyword id="KW-0368">Histidine biosynthesis</keyword>
<keyword id="KW-0378">Hydrolase</keyword>
<keyword id="KW-0486">Methionine biosynthesis</keyword>
<keyword id="KW-0511">Multifunctional enzyme</keyword>
<keyword id="KW-0521">NADP</keyword>
<keyword id="KW-0554">One-carbon metabolism</keyword>
<keyword id="KW-0560">Oxidoreductase</keyword>
<keyword id="KW-0658">Purine biosynthesis</keyword>
<keyword id="KW-1185">Reference proteome</keyword>
<proteinExistence type="inferred from homology"/>
<name>FOLD_STRU0</name>
<accession>B9DUU0</accession>
<evidence type="ECO:0000255" key="1">
    <source>
        <dbReference type="HAMAP-Rule" id="MF_01576"/>
    </source>
</evidence>
<comment type="function">
    <text evidence="1">Catalyzes the oxidation of 5,10-methylenetetrahydrofolate to 5,10-methenyltetrahydrofolate and then the hydrolysis of 5,10-methenyltetrahydrofolate to 10-formyltetrahydrofolate.</text>
</comment>
<comment type="catalytic activity">
    <reaction evidence="1">
        <text>(6R)-5,10-methylene-5,6,7,8-tetrahydrofolate + NADP(+) = (6R)-5,10-methenyltetrahydrofolate + NADPH</text>
        <dbReference type="Rhea" id="RHEA:22812"/>
        <dbReference type="ChEBI" id="CHEBI:15636"/>
        <dbReference type="ChEBI" id="CHEBI:57455"/>
        <dbReference type="ChEBI" id="CHEBI:57783"/>
        <dbReference type="ChEBI" id="CHEBI:58349"/>
        <dbReference type="EC" id="1.5.1.5"/>
    </reaction>
</comment>
<comment type="catalytic activity">
    <reaction evidence="1">
        <text>(6R)-5,10-methenyltetrahydrofolate + H2O = (6R)-10-formyltetrahydrofolate + H(+)</text>
        <dbReference type="Rhea" id="RHEA:23700"/>
        <dbReference type="ChEBI" id="CHEBI:15377"/>
        <dbReference type="ChEBI" id="CHEBI:15378"/>
        <dbReference type="ChEBI" id="CHEBI:57455"/>
        <dbReference type="ChEBI" id="CHEBI:195366"/>
        <dbReference type="EC" id="3.5.4.9"/>
    </reaction>
</comment>
<comment type="pathway">
    <text evidence="1">One-carbon metabolism; tetrahydrofolate interconversion.</text>
</comment>
<comment type="subunit">
    <text evidence="1">Homodimer.</text>
</comment>
<comment type="similarity">
    <text evidence="1">Belongs to the tetrahydrofolate dehydrogenase/cyclohydrolase family.</text>
</comment>